<keyword id="KW-0158">Chromosome</keyword>
<keyword id="KW-0217">Developmental protein</keyword>
<keyword id="KW-0221">Differentiation</keyword>
<keyword id="KW-0238">DNA-binding</keyword>
<keyword id="KW-0479">Metal-binding</keyword>
<keyword id="KW-0544">Nucleosome core</keyword>
<keyword id="KW-0539">Nucleus</keyword>
<keyword id="KW-0597">Phosphoprotein</keyword>
<keyword id="KW-1185">Reference proteome</keyword>
<keyword id="KW-0744">Spermatogenesis</keyword>
<keyword id="KW-0862">Zinc</keyword>
<evidence type="ECO:0000250" key="1">
    <source>
        <dbReference type="UniProtKB" id="P11101"/>
    </source>
</evidence>
<evidence type="ECO:0000250" key="2">
    <source>
        <dbReference type="UniProtKB" id="P11378"/>
    </source>
</evidence>
<evidence type="ECO:0000256" key="3">
    <source>
        <dbReference type="SAM" id="MobiDB-lite"/>
    </source>
</evidence>
<evidence type="ECO:0000305" key="4"/>
<name>STP2_MACFA</name>
<accession>Q8WNV1</accession>
<accession>Q4R607</accession>
<comment type="function">
    <text evidence="2">Plays a key role in the replacement of histones to protamine in the elongating spermatids of mammals. In condensing spermatids, loaded onto the nucleosomes, where it promotes the recruitment and processing of protamines, which are responsible for histone eviction.</text>
</comment>
<comment type="subcellular location">
    <subcellularLocation>
        <location evidence="1">Nucleus</location>
    </subcellularLocation>
    <subcellularLocation>
        <location evidence="1">Nucleus</location>
        <location evidence="1">Nucleolus</location>
    </subcellularLocation>
    <subcellularLocation>
        <location evidence="1">Chromosome</location>
    </subcellularLocation>
    <text evidence="1 2">Loaded onto the nucleosomes of condensing spermatids (By similarity). Nuclear import is mediated by IPO4. Nucleolar localization requires the protein to be phosphorylated (By similarity).</text>
</comment>
<comment type="tissue specificity">
    <text>Testis.</text>
</comment>
<comment type="similarity">
    <text evidence="4">Belongs to the nuclear transition protein 2 family.</text>
</comment>
<gene>
    <name type="primary">TNP2</name>
    <name type="ORF">QtsA-11347</name>
    <name type="ORF">QtsA-19461</name>
</gene>
<proteinExistence type="evidence at transcript level"/>
<dbReference type="EMBL" id="AB064994">
    <property type="protein sequence ID" value="BAB83536.1"/>
    <property type="molecule type" value="mRNA"/>
</dbReference>
<dbReference type="EMBL" id="AB169384">
    <property type="protein sequence ID" value="BAE01468.1"/>
    <property type="molecule type" value="mRNA"/>
</dbReference>
<dbReference type="RefSeq" id="NP_001274665.1">
    <property type="nucleotide sequence ID" value="NM_001287736.1"/>
</dbReference>
<dbReference type="RefSeq" id="XP_045238191.1">
    <property type="nucleotide sequence ID" value="XM_045382256.2"/>
</dbReference>
<dbReference type="SMR" id="Q8WNV1"/>
<dbReference type="STRING" id="9541.ENSMFAP00000031205"/>
<dbReference type="Ensembl" id="ENSMFAT00000005419.2">
    <property type="protein sequence ID" value="ENSMFAP00000031205.1"/>
    <property type="gene ID" value="ENSMFAG00000036693.2"/>
</dbReference>
<dbReference type="GeneID" id="102135039"/>
<dbReference type="VEuPathDB" id="HostDB:ENSMFAG00000036693"/>
<dbReference type="eggNOG" id="KOG4566">
    <property type="taxonomic scope" value="Eukaryota"/>
</dbReference>
<dbReference type="GeneTree" id="ENSGT00390000008176"/>
<dbReference type="OMA" id="SCSHHCQ"/>
<dbReference type="Proteomes" id="UP000233100">
    <property type="component" value="Chromosome 20"/>
</dbReference>
<dbReference type="Bgee" id="ENSMFAG00000036693">
    <property type="expression patterns" value="Expressed in multicellular organism"/>
</dbReference>
<dbReference type="GO" id="GO:0005730">
    <property type="term" value="C:nucleolus"/>
    <property type="evidence" value="ECO:0007669"/>
    <property type="project" value="UniProtKB-SubCell"/>
</dbReference>
<dbReference type="GO" id="GO:0000786">
    <property type="term" value="C:nucleosome"/>
    <property type="evidence" value="ECO:0000250"/>
    <property type="project" value="UniProtKB"/>
</dbReference>
<dbReference type="GO" id="GO:0003677">
    <property type="term" value="F:DNA binding"/>
    <property type="evidence" value="ECO:0007669"/>
    <property type="project" value="UniProtKB-KW"/>
</dbReference>
<dbReference type="GO" id="GO:0008270">
    <property type="term" value="F:zinc ion binding"/>
    <property type="evidence" value="ECO:0007669"/>
    <property type="project" value="TreeGrafter"/>
</dbReference>
<dbReference type="GO" id="GO:0007340">
    <property type="term" value="P:acrosome reaction"/>
    <property type="evidence" value="ECO:0007669"/>
    <property type="project" value="TreeGrafter"/>
</dbReference>
<dbReference type="GO" id="GO:0007341">
    <property type="term" value="P:penetration of zona pellucida"/>
    <property type="evidence" value="ECO:0007669"/>
    <property type="project" value="TreeGrafter"/>
</dbReference>
<dbReference type="GO" id="GO:0010954">
    <property type="term" value="P:positive regulation of protein processing"/>
    <property type="evidence" value="ECO:0000250"/>
    <property type="project" value="UniProtKB"/>
</dbReference>
<dbReference type="GO" id="GO:0035092">
    <property type="term" value="P:sperm DNA condensation"/>
    <property type="evidence" value="ECO:0000250"/>
    <property type="project" value="UniProtKB"/>
</dbReference>
<dbReference type="InterPro" id="IPR000678">
    <property type="entry name" value="TP2"/>
</dbReference>
<dbReference type="PANTHER" id="PTHR17488">
    <property type="entry name" value="NUCLEAR TRANSITION PROTEIN 2"/>
    <property type="match status" value="1"/>
</dbReference>
<dbReference type="PANTHER" id="PTHR17488:SF0">
    <property type="entry name" value="NUCLEAR TRANSITION PROTEIN 2"/>
    <property type="match status" value="1"/>
</dbReference>
<dbReference type="Pfam" id="PF01254">
    <property type="entry name" value="TP2"/>
    <property type="match status" value="1"/>
</dbReference>
<dbReference type="PROSITE" id="PS00970">
    <property type="entry name" value="TP2_1"/>
    <property type="match status" value="1"/>
</dbReference>
<dbReference type="PROSITE" id="PS00971">
    <property type="entry name" value="TP2_2"/>
    <property type="match status" value="1"/>
</dbReference>
<organism>
    <name type="scientific">Macaca fascicularis</name>
    <name type="common">Crab-eating macaque</name>
    <name type="synonym">Cynomolgus monkey</name>
    <dbReference type="NCBI Taxonomy" id="9541"/>
    <lineage>
        <taxon>Eukaryota</taxon>
        <taxon>Metazoa</taxon>
        <taxon>Chordata</taxon>
        <taxon>Craniata</taxon>
        <taxon>Vertebrata</taxon>
        <taxon>Euteleostomi</taxon>
        <taxon>Mammalia</taxon>
        <taxon>Eutheria</taxon>
        <taxon>Euarchontoglires</taxon>
        <taxon>Primates</taxon>
        <taxon>Haplorrhini</taxon>
        <taxon>Catarrhini</taxon>
        <taxon>Cercopithecidae</taxon>
        <taxon>Cercopithecinae</taxon>
        <taxon>Macaca</taxon>
    </lineage>
</organism>
<reference key="1">
    <citation type="journal article" date="2002" name="BMC Genomics">
        <title>Cynomolgus monkey testicular cDNAs for discovery of novel human genes in the human genome sequence.</title>
        <authorList>
            <person name="Osada N."/>
            <person name="Hida M."/>
            <person name="Kusuda J."/>
            <person name="Tanuma R."/>
            <person name="Hirata M."/>
            <person name="Suto Y."/>
            <person name="Hirai M."/>
            <person name="Terao K."/>
            <person name="Sugano S."/>
            <person name="Hashimoto K."/>
        </authorList>
    </citation>
    <scope>NUCLEOTIDE SEQUENCE [LARGE SCALE MRNA]</scope>
    <source>
        <tissue>Testis</tissue>
    </source>
</reference>
<reference key="2">
    <citation type="submission" date="2005-06" db="EMBL/GenBank/DDBJ databases">
        <title>DNA sequences of macaque genes expressed in brain or testis and its evolutionary implications.</title>
        <authorList>
            <consortium name="International consortium for macaque cDNA sequencing and analysis"/>
        </authorList>
    </citation>
    <scope>NUCLEOTIDE SEQUENCE [LARGE SCALE MRNA]</scope>
    <source>
        <tissue>Testis</tissue>
    </source>
</reference>
<protein>
    <recommendedName>
        <fullName>Nuclear transition protein 2</fullName>
        <shortName>TP-2</shortName>
        <shortName>TP2</shortName>
    </recommendedName>
</protein>
<feature type="chain" id="PRO_0000191426" description="Nuclear transition protein 2">
    <location>
        <begin position="1"/>
        <end position="141"/>
    </location>
</feature>
<feature type="region of interest" description="Disordered" evidence="3">
    <location>
        <begin position="1"/>
        <end position="141"/>
    </location>
</feature>
<feature type="short sequence motif" description="Nuclear localization signal" evidence="1">
    <location>
        <begin position="114"/>
        <end position="122"/>
    </location>
</feature>
<feature type="compositionally biased region" description="Polar residues" evidence="3">
    <location>
        <begin position="1"/>
        <end position="36"/>
    </location>
</feature>
<feature type="compositionally biased region" description="Low complexity" evidence="3">
    <location>
        <begin position="37"/>
        <end position="55"/>
    </location>
</feature>
<feature type="compositionally biased region" description="Polar residues" evidence="3">
    <location>
        <begin position="56"/>
        <end position="77"/>
    </location>
</feature>
<feature type="compositionally biased region" description="Polar residues" evidence="3">
    <location>
        <begin position="91"/>
        <end position="106"/>
    </location>
</feature>
<feature type="compositionally biased region" description="Basic residues" evidence="3">
    <location>
        <begin position="130"/>
        <end position="141"/>
    </location>
</feature>
<feature type="binding site" evidence="1">
    <location>
        <position position="12"/>
    </location>
    <ligand>
        <name>Zn(2+)</name>
        <dbReference type="ChEBI" id="CHEBI:29105"/>
    </ligand>
</feature>
<feature type="binding site" evidence="1">
    <location>
        <position position="16"/>
    </location>
    <ligand>
        <name>Zn(2+)</name>
        <dbReference type="ChEBI" id="CHEBI:29105"/>
    </ligand>
</feature>
<feature type="binding site" evidence="1">
    <location>
        <position position="27"/>
    </location>
    <ligand>
        <name>Zn(2+)</name>
        <dbReference type="ChEBI" id="CHEBI:29105"/>
    </ligand>
</feature>
<feature type="binding site" evidence="1">
    <location>
        <position position="29"/>
    </location>
    <ligand>
        <name>Zn(2+)</name>
        <dbReference type="ChEBI" id="CHEBI:29105"/>
    </ligand>
</feature>
<feature type="binding site" evidence="1">
    <location>
        <position position="33"/>
    </location>
    <ligand>
        <name>Zn(2+)</name>
        <dbReference type="ChEBI" id="CHEBI:29105"/>
    </ligand>
</feature>
<feature type="modified residue" description="Phosphoserine" evidence="1">
    <location>
        <position position="136"/>
    </location>
</feature>
<sequence length="141" mass="15777">MDTKTHSLPITHTQLHSNSRPQSRSQCTCTHHCQTFSQSCRQSQRGSRSRSSSQSPATHQNPTGAHSSSGCQSQSPNASPPPKRHKKTMNSHHSPTRPTILHSSCPKNRKNLEGKLNKKKMAKRIQQVYKTKKRSSGRKSN</sequence>